<sequence length="525" mass="59054">MPSNNLIKNALISVSDKKNIVEVAEKLIINKINLFSTGGTAQILKKNNIPVTEISDYTKFPEIMDGRVKTLHPKIMGGILGQKQKDQEIMKLYNICPIDIVIVNFYPFEKIKNIKKNDIDNVVNNIDIGGPTLVRASAKNYKNVIVIVDLDDFQSTIDSINNNTMNMEKRFNLASKAFEYTSYYEQIISQYFIEQNSLYKKTNNSLFPNEINFSFIKKQDLRYGENYHQKSSFYIEKNMCDSGTISTACQIQGKTLSYNNISDSDIALECVKQFTKPACVIVKHGNPCSVAVSHNILESYLSAYNSDPISAFGGIISFNCKLDEKTAQTIINQQFVEVIIIPEISKKAVKILQKKQNIRVLVTGKLQNNTVGLDLKKITNGLLVQEYDSHNIDYNSWSFVTKRSPTKKELKDSIFCWQVAKFVKSNAIVYGSDEITIGIGAGQMSRIYSTKLANIKVKDQGKNIIGATMASDAFFPFRDGIDEAASVGISSIIQPGGSIRDEEIIRAADEHNITMIFTKKRHFKH</sequence>
<evidence type="ECO:0000255" key="1">
    <source>
        <dbReference type="HAMAP-Rule" id="MF_00139"/>
    </source>
</evidence>
<evidence type="ECO:0000255" key="2">
    <source>
        <dbReference type="PROSITE-ProRule" id="PRU01202"/>
    </source>
</evidence>
<evidence type="ECO:0000305" key="3"/>
<gene>
    <name evidence="1" type="primary">purH</name>
    <name type="ordered locus">BU031</name>
</gene>
<protein>
    <recommendedName>
        <fullName evidence="1">Bifunctional purine biosynthesis protein PurH</fullName>
    </recommendedName>
    <domain>
        <recommendedName>
            <fullName evidence="1">Phosphoribosylaminoimidazolecarboxamide formyltransferase</fullName>
            <ecNumber evidence="1">2.1.2.3</ecNumber>
        </recommendedName>
        <alternativeName>
            <fullName evidence="1">AICAR transformylase</fullName>
        </alternativeName>
    </domain>
    <domain>
        <recommendedName>
            <fullName evidence="1">IMP cyclohydrolase</fullName>
            <ecNumber evidence="1">3.5.4.10</ecNumber>
        </recommendedName>
        <alternativeName>
            <fullName evidence="1">ATIC</fullName>
        </alternativeName>
        <alternativeName>
            <fullName evidence="1">IMP synthase</fullName>
        </alternativeName>
        <alternativeName>
            <fullName evidence="1">Inosinicase</fullName>
        </alternativeName>
    </domain>
</protein>
<dbReference type="EC" id="2.1.2.3" evidence="1"/>
<dbReference type="EC" id="3.5.4.10" evidence="1"/>
<dbReference type="EMBL" id="BA000003">
    <property type="protein sequence ID" value="BAB12758.1"/>
    <property type="molecule type" value="Genomic_DNA"/>
</dbReference>
<dbReference type="RefSeq" id="NP_239872.1">
    <property type="nucleotide sequence ID" value="NC_002528.1"/>
</dbReference>
<dbReference type="RefSeq" id="WP_010895909.1">
    <property type="nucleotide sequence ID" value="NZ_AP036055.1"/>
</dbReference>
<dbReference type="SMR" id="P57143"/>
<dbReference type="STRING" id="563178.BUAP5A_030"/>
<dbReference type="EnsemblBacteria" id="BAB12758">
    <property type="protein sequence ID" value="BAB12758"/>
    <property type="gene ID" value="BAB12758"/>
</dbReference>
<dbReference type="KEGG" id="buc:BU031"/>
<dbReference type="PATRIC" id="fig|107806.10.peg.43"/>
<dbReference type="eggNOG" id="COG0138">
    <property type="taxonomic scope" value="Bacteria"/>
</dbReference>
<dbReference type="HOGENOM" id="CLU_016316_5_2_6"/>
<dbReference type="UniPathway" id="UPA00074">
    <property type="reaction ID" value="UER00133"/>
</dbReference>
<dbReference type="UniPathway" id="UPA00074">
    <property type="reaction ID" value="UER00135"/>
</dbReference>
<dbReference type="Proteomes" id="UP000001806">
    <property type="component" value="Chromosome"/>
</dbReference>
<dbReference type="GO" id="GO:0005829">
    <property type="term" value="C:cytosol"/>
    <property type="evidence" value="ECO:0007669"/>
    <property type="project" value="TreeGrafter"/>
</dbReference>
<dbReference type="GO" id="GO:0003937">
    <property type="term" value="F:IMP cyclohydrolase activity"/>
    <property type="evidence" value="ECO:0007669"/>
    <property type="project" value="UniProtKB-UniRule"/>
</dbReference>
<dbReference type="GO" id="GO:0004643">
    <property type="term" value="F:phosphoribosylaminoimidazolecarboxamide formyltransferase activity"/>
    <property type="evidence" value="ECO:0007669"/>
    <property type="project" value="UniProtKB-UniRule"/>
</dbReference>
<dbReference type="GO" id="GO:0006189">
    <property type="term" value="P:'de novo' IMP biosynthetic process"/>
    <property type="evidence" value="ECO:0007669"/>
    <property type="project" value="UniProtKB-UniRule"/>
</dbReference>
<dbReference type="CDD" id="cd01421">
    <property type="entry name" value="IMPCH"/>
    <property type="match status" value="1"/>
</dbReference>
<dbReference type="FunFam" id="3.40.140.20:FF:000001">
    <property type="entry name" value="Bifunctional purine biosynthesis protein PurH"/>
    <property type="match status" value="1"/>
</dbReference>
<dbReference type="FunFam" id="3.40.140.20:FF:000002">
    <property type="entry name" value="Bifunctional purine biosynthesis protein PurH"/>
    <property type="match status" value="1"/>
</dbReference>
<dbReference type="FunFam" id="3.40.50.1380:FF:000001">
    <property type="entry name" value="Bifunctional purine biosynthesis protein PurH"/>
    <property type="match status" value="1"/>
</dbReference>
<dbReference type="Gene3D" id="3.40.140.20">
    <property type="match status" value="2"/>
</dbReference>
<dbReference type="Gene3D" id="3.40.50.1380">
    <property type="entry name" value="Methylglyoxal synthase-like domain"/>
    <property type="match status" value="1"/>
</dbReference>
<dbReference type="HAMAP" id="MF_00139">
    <property type="entry name" value="PurH"/>
    <property type="match status" value="1"/>
</dbReference>
<dbReference type="InterPro" id="IPR024051">
    <property type="entry name" value="AICAR_Tfase_dup_dom_sf"/>
</dbReference>
<dbReference type="InterPro" id="IPR016193">
    <property type="entry name" value="Cytidine_deaminase-like"/>
</dbReference>
<dbReference type="InterPro" id="IPR011607">
    <property type="entry name" value="MGS-like_dom"/>
</dbReference>
<dbReference type="InterPro" id="IPR036914">
    <property type="entry name" value="MGS-like_dom_sf"/>
</dbReference>
<dbReference type="InterPro" id="IPR002695">
    <property type="entry name" value="PurH-like"/>
</dbReference>
<dbReference type="NCBIfam" id="NF002049">
    <property type="entry name" value="PRK00881.1"/>
    <property type="match status" value="1"/>
</dbReference>
<dbReference type="NCBIfam" id="TIGR00355">
    <property type="entry name" value="purH"/>
    <property type="match status" value="1"/>
</dbReference>
<dbReference type="PANTHER" id="PTHR11692:SF0">
    <property type="entry name" value="BIFUNCTIONAL PURINE BIOSYNTHESIS PROTEIN ATIC"/>
    <property type="match status" value="1"/>
</dbReference>
<dbReference type="PANTHER" id="PTHR11692">
    <property type="entry name" value="BIFUNCTIONAL PURINE BIOSYNTHESIS PROTEIN PURH"/>
    <property type="match status" value="1"/>
</dbReference>
<dbReference type="Pfam" id="PF01808">
    <property type="entry name" value="AICARFT_IMPCHas"/>
    <property type="match status" value="1"/>
</dbReference>
<dbReference type="Pfam" id="PF02142">
    <property type="entry name" value="MGS"/>
    <property type="match status" value="1"/>
</dbReference>
<dbReference type="PIRSF" id="PIRSF000414">
    <property type="entry name" value="AICARFT_IMPCHas"/>
    <property type="match status" value="1"/>
</dbReference>
<dbReference type="SMART" id="SM00798">
    <property type="entry name" value="AICARFT_IMPCHas"/>
    <property type="match status" value="1"/>
</dbReference>
<dbReference type="SMART" id="SM00851">
    <property type="entry name" value="MGS"/>
    <property type="match status" value="1"/>
</dbReference>
<dbReference type="SUPFAM" id="SSF53927">
    <property type="entry name" value="Cytidine deaminase-like"/>
    <property type="match status" value="1"/>
</dbReference>
<dbReference type="SUPFAM" id="SSF52335">
    <property type="entry name" value="Methylglyoxal synthase-like"/>
    <property type="match status" value="1"/>
</dbReference>
<dbReference type="PROSITE" id="PS51855">
    <property type="entry name" value="MGS"/>
    <property type="match status" value="1"/>
</dbReference>
<comment type="catalytic activity">
    <reaction evidence="1">
        <text>(6R)-10-formyltetrahydrofolate + 5-amino-1-(5-phospho-beta-D-ribosyl)imidazole-4-carboxamide = 5-formamido-1-(5-phospho-D-ribosyl)imidazole-4-carboxamide + (6S)-5,6,7,8-tetrahydrofolate</text>
        <dbReference type="Rhea" id="RHEA:22192"/>
        <dbReference type="ChEBI" id="CHEBI:57453"/>
        <dbReference type="ChEBI" id="CHEBI:58467"/>
        <dbReference type="ChEBI" id="CHEBI:58475"/>
        <dbReference type="ChEBI" id="CHEBI:195366"/>
        <dbReference type="EC" id="2.1.2.3"/>
    </reaction>
</comment>
<comment type="catalytic activity">
    <reaction evidence="1">
        <text>IMP + H2O = 5-formamido-1-(5-phospho-D-ribosyl)imidazole-4-carboxamide</text>
        <dbReference type="Rhea" id="RHEA:18445"/>
        <dbReference type="ChEBI" id="CHEBI:15377"/>
        <dbReference type="ChEBI" id="CHEBI:58053"/>
        <dbReference type="ChEBI" id="CHEBI:58467"/>
        <dbReference type="EC" id="3.5.4.10"/>
    </reaction>
</comment>
<comment type="pathway">
    <text evidence="1">Purine metabolism; IMP biosynthesis via de novo pathway; 5-formamido-1-(5-phospho-D-ribosyl)imidazole-4-carboxamide from 5-amino-1-(5-phospho-D-ribosyl)imidazole-4-carboxamide (10-formyl THF route): step 1/1.</text>
</comment>
<comment type="pathway">
    <text evidence="1">Purine metabolism; IMP biosynthesis via de novo pathway; IMP from 5-formamido-1-(5-phospho-D-ribosyl)imidazole-4-carboxamide: step 1/1.</text>
</comment>
<comment type="domain">
    <text evidence="1">The IMP cyclohydrolase activity resides in the N-terminal region.</text>
</comment>
<comment type="similarity">
    <text evidence="1 3">Belongs to the PurH family.</text>
</comment>
<feature type="chain" id="PRO_0000192076" description="Bifunctional purine biosynthesis protein PurH">
    <location>
        <begin position="1"/>
        <end position="525"/>
    </location>
</feature>
<feature type="domain" description="MGS-like" evidence="2">
    <location>
        <begin position="1"/>
        <end position="148"/>
    </location>
</feature>
<keyword id="KW-0378">Hydrolase</keyword>
<keyword id="KW-0511">Multifunctional enzyme</keyword>
<keyword id="KW-0658">Purine biosynthesis</keyword>
<keyword id="KW-1185">Reference proteome</keyword>
<keyword id="KW-0808">Transferase</keyword>
<accession>P57143</accession>
<name>PUR9_BUCAI</name>
<organism>
    <name type="scientific">Buchnera aphidicola subsp. Acyrthosiphon pisum (strain APS)</name>
    <name type="common">Acyrthosiphon pisum symbiotic bacterium</name>
    <dbReference type="NCBI Taxonomy" id="107806"/>
    <lineage>
        <taxon>Bacteria</taxon>
        <taxon>Pseudomonadati</taxon>
        <taxon>Pseudomonadota</taxon>
        <taxon>Gammaproteobacteria</taxon>
        <taxon>Enterobacterales</taxon>
        <taxon>Erwiniaceae</taxon>
        <taxon>Buchnera</taxon>
    </lineage>
</organism>
<proteinExistence type="inferred from homology"/>
<reference key="1">
    <citation type="journal article" date="2000" name="Nature">
        <title>Genome sequence of the endocellular bacterial symbiont of aphids Buchnera sp. APS.</title>
        <authorList>
            <person name="Shigenobu S."/>
            <person name="Watanabe H."/>
            <person name="Hattori M."/>
            <person name="Sakaki Y."/>
            <person name="Ishikawa H."/>
        </authorList>
    </citation>
    <scope>NUCLEOTIDE SEQUENCE [LARGE SCALE GENOMIC DNA]</scope>
    <source>
        <strain>APS</strain>
    </source>
</reference>